<feature type="chain" id="PRO_0000229318" description="ATP phosphoribosyltransferase">
    <location>
        <begin position="1"/>
        <end position="213"/>
    </location>
</feature>
<dbReference type="EC" id="2.4.2.17" evidence="1"/>
<dbReference type="EMBL" id="AE017282">
    <property type="protein sequence ID" value="AAU92020.1"/>
    <property type="molecule type" value="Genomic_DNA"/>
</dbReference>
<dbReference type="RefSeq" id="WP_010961210.1">
    <property type="nucleotide sequence ID" value="NC_002977.6"/>
</dbReference>
<dbReference type="SMR" id="Q606Q1"/>
<dbReference type="STRING" id="243233.MCA1964"/>
<dbReference type="GeneID" id="88224196"/>
<dbReference type="KEGG" id="mca:MCA1964"/>
<dbReference type="eggNOG" id="COG0040">
    <property type="taxonomic scope" value="Bacteria"/>
</dbReference>
<dbReference type="HOGENOM" id="CLU_038115_2_0_6"/>
<dbReference type="UniPathway" id="UPA00031">
    <property type="reaction ID" value="UER00006"/>
</dbReference>
<dbReference type="Proteomes" id="UP000006821">
    <property type="component" value="Chromosome"/>
</dbReference>
<dbReference type="GO" id="GO:0005737">
    <property type="term" value="C:cytoplasm"/>
    <property type="evidence" value="ECO:0007669"/>
    <property type="project" value="UniProtKB-SubCell"/>
</dbReference>
<dbReference type="GO" id="GO:0005524">
    <property type="term" value="F:ATP binding"/>
    <property type="evidence" value="ECO:0007669"/>
    <property type="project" value="UniProtKB-KW"/>
</dbReference>
<dbReference type="GO" id="GO:0003879">
    <property type="term" value="F:ATP phosphoribosyltransferase activity"/>
    <property type="evidence" value="ECO:0007669"/>
    <property type="project" value="UniProtKB-UniRule"/>
</dbReference>
<dbReference type="GO" id="GO:0000105">
    <property type="term" value="P:L-histidine biosynthetic process"/>
    <property type="evidence" value="ECO:0007669"/>
    <property type="project" value="UniProtKB-UniRule"/>
</dbReference>
<dbReference type="CDD" id="cd13595">
    <property type="entry name" value="PBP2_HisGs"/>
    <property type="match status" value="1"/>
</dbReference>
<dbReference type="FunFam" id="3.40.190.10:FF:000008">
    <property type="entry name" value="ATP phosphoribosyltransferase"/>
    <property type="match status" value="1"/>
</dbReference>
<dbReference type="FunFam" id="3.40.190.10:FF:000011">
    <property type="entry name" value="ATP phosphoribosyltransferase"/>
    <property type="match status" value="1"/>
</dbReference>
<dbReference type="Gene3D" id="3.40.190.10">
    <property type="entry name" value="Periplasmic binding protein-like II"/>
    <property type="match status" value="2"/>
</dbReference>
<dbReference type="HAMAP" id="MF_01018">
    <property type="entry name" value="HisG_Short"/>
    <property type="match status" value="1"/>
</dbReference>
<dbReference type="InterPro" id="IPR013820">
    <property type="entry name" value="ATP_PRibTrfase_cat"/>
</dbReference>
<dbReference type="InterPro" id="IPR018198">
    <property type="entry name" value="ATP_PRibTrfase_CS"/>
</dbReference>
<dbReference type="InterPro" id="IPR001348">
    <property type="entry name" value="ATP_PRibTrfase_HisG"/>
</dbReference>
<dbReference type="InterPro" id="IPR024893">
    <property type="entry name" value="ATP_PRibTrfase_HisG_short"/>
</dbReference>
<dbReference type="NCBIfam" id="TIGR00070">
    <property type="entry name" value="hisG"/>
    <property type="match status" value="1"/>
</dbReference>
<dbReference type="PANTHER" id="PTHR21403:SF8">
    <property type="entry name" value="ATP PHOSPHORIBOSYLTRANSFERASE"/>
    <property type="match status" value="1"/>
</dbReference>
<dbReference type="PANTHER" id="PTHR21403">
    <property type="entry name" value="ATP PHOSPHORIBOSYLTRANSFERASE ATP-PRTASE"/>
    <property type="match status" value="1"/>
</dbReference>
<dbReference type="Pfam" id="PF01634">
    <property type="entry name" value="HisG"/>
    <property type="match status" value="1"/>
</dbReference>
<dbReference type="SUPFAM" id="SSF53850">
    <property type="entry name" value="Periplasmic binding protein-like II"/>
    <property type="match status" value="1"/>
</dbReference>
<dbReference type="PROSITE" id="PS01316">
    <property type="entry name" value="ATP_P_PHORIBOSYLTR"/>
    <property type="match status" value="1"/>
</dbReference>
<gene>
    <name evidence="1" type="primary">hisG</name>
    <name type="ordered locus">MCA1964</name>
</gene>
<organism>
    <name type="scientific">Methylococcus capsulatus (strain ATCC 33009 / NCIMB 11132 / Bath)</name>
    <dbReference type="NCBI Taxonomy" id="243233"/>
    <lineage>
        <taxon>Bacteria</taxon>
        <taxon>Pseudomonadati</taxon>
        <taxon>Pseudomonadota</taxon>
        <taxon>Gammaproteobacteria</taxon>
        <taxon>Methylococcales</taxon>
        <taxon>Methylococcaceae</taxon>
        <taxon>Methylococcus</taxon>
    </lineage>
</organism>
<proteinExistence type="inferred from homology"/>
<protein>
    <recommendedName>
        <fullName evidence="1">ATP phosphoribosyltransferase</fullName>
        <shortName evidence="1">ATP-PRT</shortName>
        <shortName evidence="1">ATP-PRTase</shortName>
        <ecNumber evidence="1">2.4.2.17</ecNumber>
    </recommendedName>
</protein>
<sequence>MLTIAVSKGRIYQEALPLLAEAGIVPSVDPDKSRKLILPTERDDVQLVIIRAADVPTYVEYGAADLGIAGKDVLVEYEGEGLYEPLDLGIARCRLMTAGPPGRPVASRRLRVATKYVNTAKRFFARRGVQAEVIKLYGSMELAPLVGLADCIVDLVDTGNTLRANGLAPQELIMDISSRLVVNKAAMKMKYGPITELAGHLARIVSARAARER</sequence>
<evidence type="ECO:0000255" key="1">
    <source>
        <dbReference type="HAMAP-Rule" id="MF_01018"/>
    </source>
</evidence>
<comment type="function">
    <text evidence="1">Catalyzes the condensation of ATP and 5-phosphoribose 1-diphosphate to form N'-(5'-phosphoribosyl)-ATP (PR-ATP). Has a crucial role in the pathway because the rate of histidine biosynthesis seems to be controlled primarily by regulation of HisG enzymatic activity.</text>
</comment>
<comment type="catalytic activity">
    <reaction evidence="1">
        <text>1-(5-phospho-beta-D-ribosyl)-ATP + diphosphate = 5-phospho-alpha-D-ribose 1-diphosphate + ATP</text>
        <dbReference type="Rhea" id="RHEA:18473"/>
        <dbReference type="ChEBI" id="CHEBI:30616"/>
        <dbReference type="ChEBI" id="CHEBI:33019"/>
        <dbReference type="ChEBI" id="CHEBI:58017"/>
        <dbReference type="ChEBI" id="CHEBI:73183"/>
        <dbReference type="EC" id="2.4.2.17"/>
    </reaction>
</comment>
<comment type="pathway">
    <text evidence="1">Amino-acid biosynthesis; L-histidine biosynthesis; L-histidine from 5-phospho-alpha-D-ribose 1-diphosphate: step 1/9.</text>
</comment>
<comment type="subunit">
    <text evidence="1">Heteromultimer composed of HisG and HisZ subunits.</text>
</comment>
<comment type="subcellular location">
    <subcellularLocation>
        <location evidence="1">Cytoplasm</location>
    </subcellularLocation>
</comment>
<comment type="domain">
    <text>Lacks the C-terminal regulatory region which is replaced by HisZ.</text>
</comment>
<comment type="similarity">
    <text evidence="1">Belongs to the ATP phosphoribosyltransferase family. Short subfamily.</text>
</comment>
<accession>Q606Q1</accession>
<keyword id="KW-0028">Amino-acid biosynthesis</keyword>
<keyword id="KW-0067">ATP-binding</keyword>
<keyword id="KW-0963">Cytoplasm</keyword>
<keyword id="KW-0328">Glycosyltransferase</keyword>
<keyword id="KW-0368">Histidine biosynthesis</keyword>
<keyword id="KW-0547">Nucleotide-binding</keyword>
<keyword id="KW-1185">Reference proteome</keyword>
<keyword id="KW-0808">Transferase</keyword>
<name>HIS1_METCA</name>
<reference key="1">
    <citation type="journal article" date="2004" name="PLoS Biol.">
        <title>Genomic insights into methanotrophy: the complete genome sequence of Methylococcus capsulatus (Bath).</title>
        <authorList>
            <person name="Ward N.L."/>
            <person name="Larsen O."/>
            <person name="Sakwa J."/>
            <person name="Bruseth L."/>
            <person name="Khouri H.M."/>
            <person name="Durkin A.S."/>
            <person name="Dimitrov G."/>
            <person name="Jiang L."/>
            <person name="Scanlan D."/>
            <person name="Kang K.H."/>
            <person name="Lewis M.R."/>
            <person name="Nelson K.E."/>
            <person name="Methe B.A."/>
            <person name="Wu M."/>
            <person name="Heidelberg J.F."/>
            <person name="Paulsen I.T."/>
            <person name="Fouts D.E."/>
            <person name="Ravel J."/>
            <person name="Tettelin H."/>
            <person name="Ren Q."/>
            <person name="Read T.D."/>
            <person name="DeBoy R.T."/>
            <person name="Seshadri R."/>
            <person name="Salzberg S.L."/>
            <person name="Jensen H.B."/>
            <person name="Birkeland N.K."/>
            <person name="Nelson W.C."/>
            <person name="Dodson R.J."/>
            <person name="Grindhaug S.H."/>
            <person name="Holt I.E."/>
            <person name="Eidhammer I."/>
            <person name="Jonasen I."/>
            <person name="Vanaken S."/>
            <person name="Utterback T.R."/>
            <person name="Feldblyum T.V."/>
            <person name="Fraser C.M."/>
            <person name="Lillehaug J.R."/>
            <person name="Eisen J.A."/>
        </authorList>
    </citation>
    <scope>NUCLEOTIDE SEQUENCE [LARGE SCALE GENOMIC DNA]</scope>
    <source>
        <strain>ATCC 33009 / NCIMB 11132 / Bath</strain>
    </source>
</reference>